<sequence length="222" mass="24489">MKLLAPSILAGDWWCIGEQIQATIRGGADILHYDVMDGHFVPNITAGYEILSHIRKRASLPIDAHLMIENPDKYIPKFVEAGANWISVHIENNYHIHRTLQLIKELGAKAGVVVNPGTSLSAIEEALYYADYVLLMSVNPGFSGQKFIERSIERLRILKEMRDRINPSCLIEIDGGIKENNIAEVVRAGADVVVVGSGIFGAKDIEAQTRKLKSLMLSAVSV</sequence>
<reference key="1">
    <citation type="journal article" date="1998" name="Nature">
        <title>The complete genome of the hyperthermophilic bacterium Aquifex aeolicus.</title>
        <authorList>
            <person name="Deckert G."/>
            <person name="Warren P.V."/>
            <person name="Gaasterland T."/>
            <person name="Young W.G."/>
            <person name="Lenox A.L."/>
            <person name="Graham D.E."/>
            <person name="Overbeek R."/>
            <person name="Snead M.A."/>
            <person name="Keller M."/>
            <person name="Aujay M."/>
            <person name="Huber R."/>
            <person name="Feldman R.A."/>
            <person name="Short J.M."/>
            <person name="Olsen G.J."/>
            <person name="Swanson R.V."/>
        </authorList>
    </citation>
    <scope>NUCLEOTIDE SEQUENCE [LARGE SCALE GENOMIC DNA]</scope>
    <source>
        <strain>VF5</strain>
    </source>
</reference>
<protein>
    <recommendedName>
        <fullName evidence="1">Ribulose-phosphate 3-epimerase</fullName>
        <ecNumber evidence="1">5.1.3.1</ecNumber>
    </recommendedName>
</protein>
<evidence type="ECO:0000255" key="1">
    <source>
        <dbReference type="HAMAP-Rule" id="MF_02227"/>
    </source>
</evidence>
<feature type="chain" id="PRO_0000171560" description="Ribulose-phosphate 3-epimerase">
    <location>
        <begin position="1"/>
        <end position="222"/>
    </location>
</feature>
<feature type="active site" description="Proton acceptor" evidence="1">
    <location>
        <position position="34"/>
    </location>
</feature>
<feature type="active site" description="Proton donor" evidence="1">
    <location>
        <position position="174"/>
    </location>
</feature>
<feature type="binding site" evidence="1">
    <location>
        <position position="7"/>
    </location>
    <ligand>
        <name>substrate</name>
    </ligand>
</feature>
<feature type="binding site" evidence="1">
    <location>
        <position position="32"/>
    </location>
    <ligand>
        <name>a divalent metal cation</name>
        <dbReference type="ChEBI" id="CHEBI:60240"/>
    </ligand>
</feature>
<feature type="binding site" evidence="1">
    <location>
        <position position="34"/>
    </location>
    <ligand>
        <name>a divalent metal cation</name>
        <dbReference type="ChEBI" id="CHEBI:60240"/>
    </ligand>
</feature>
<feature type="binding site" evidence="1">
    <location>
        <position position="65"/>
    </location>
    <ligand>
        <name>a divalent metal cation</name>
        <dbReference type="ChEBI" id="CHEBI:60240"/>
    </ligand>
</feature>
<feature type="binding site" evidence="1">
    <location>
        <position position="65"/>
    </location>
    <ligand>
        <name>substrate</name>
    </ligand>
</feature>
<feature type="binding site" evidence="1">
    <location>
        <begin position="141"/>
        <end position="144"/>
    </location>
    <ligand>
        <name>substrate</name>
    </ligand>
</feature>
<feature type="binding site" evidence="1">
    <location>
        <begin position="174"/>
        <end position="176"/>
    </location>
    <ligand>
        <name>substrate</name>
    </ligand>
</feature>
<feature type="binding site" evidence="1">
    <location>
        <position position="174"/>
    </location>
    <ligand>
        <name>a divalent metal cation</name>
        <dbReference type="ChEBI" id="CHEBI:60240"/>
    </ligand>
</feature>
<feature type="binding site" evidence="1">
    <location>
        <begin position="196"/>
        <end position="197"/>
    </location>
    <ligand>
        <name>substrate</name>
    </ligand>
</feature>
<keyword id="KW-0119">Carbohydrate metabolism</keyword>
<keyword id="KW-0413">Isomerase</keyword>
<keyword id="KW-0479">Metal-binding</keyword>
<keyword id="KW-1185">Reference proteome</keyword>
<organism>
    <name type="scientific">Aquifex aeolicus (strain VF5)</name>
    <dbReference type="NCBI Taxonomy" id="224324"/>
    <lineage>
        <taxon>Bacteria</taxon>
        <taxon>Pseudomonadati</taxon>
        <taxon>Aquificota</taxon>
        <taxon>Aquificia</taxon>
        <taxon>Aquificales</taxon>
        <taxon>Aquificaceae</taxon>
        <taxon>Aquifex</taxon>
    </lineage>
</organism>
<dbReference type="EC" id="5.1.3.1" evidence="1"/>
<dbReference type="EMBL" id="AE000657">
    <property type="protein sequence ID" value="AAC07062.1"/>
    <property type="molecule type" value="Genomic_DNA"/>
</dbReference>
<dbReference type="PIR" id="G70383">
    <property type="entry name" value="G70383"/>
</dbReference>
<dbReference type="RefSeq" id="NP_213661.1">
    <property type="nucleotide sequence ID" value="NC_000918.1"/>
</dbReference>
<dbReference type="RefSeq" id="WP_010880599.1">
    <property type="nucleotide sequence ID" value="NC_000918.1"/>
</dbReference>
<dbReference type="SMR" id="O67098"/>
<dbReference type="FunCoup" id="O67098">
    <property type="interactions" value="437"/>
</dbReference>
<dbReference type="STRING" id="224324.aq_968"/>
<dbReference type="EnsemblBacteria" id="AAC07062">
    <property type="protein sequence ID" value="AAC07062"/>
    <property type="gene ID" value="aq_968"/>
</dbReference>
<dbReference type="KEGG" id="aae:aq_968"/>
<dbReference type="PATRIC" id="fig|224324.8.peg.761"/>
<dbReference type="eggNOG" id="COG0036">
    <property type="taxonomic scope" value="Bacteria"/>
</dbReference>
<dbReference type="HOGENOM" id="CLU_054856_2_1_0"/>
<dbReference type="InParanoid" id="O67098"/>
<dbReference type="OrthoDB" id="1645589at2"/>
<dbReference type="Proteomes" id="UP000000798">
    <property type="component" value="Chromosome"/>
</dbReference>
<dbReference type="GO" id="GO:0005829">
    <property type="term" value="C:cytosol"/>
    <property type="evidence" value="ECO:0000318"/>
    <property type="project" value="GO_Central"/>
</dbReference>
<dbReference type="GO" id="GO:0004750">
    <property type="term" value="F:D-ribulose-phosphate 3-epimerase activity"/>
    <property type="evidence" value="ECO:0000318"/>
    <property type="project" value="GO_Central"/>
</dbReference>
<dbReference type="GO" id="GO:0046872">
    <property type="term" value="F:metal ion binding"/>
    <property type="evidence" value="ECO:0000318"/>
    <property type="project" value="GO_Central"/>
</dbReference>
<dbReference type="GO" id="GO:0005975">
    <property type="term" value="P:carbohydrate metabolic process"/>
    <property type="evidence" value="ECO:0000318"/>
    <property type="project" value="GO_Central"/>
</dbReference>
<dbReference type="GO" id="GO:0019323">
    <property type="term" value="P:pentose catabolic process"/>
    <property type="evidence" value="ECO:0007669"/>
    <property type="project" value="UniProtKB-UniRule"/>
</dbReference>
<dbReference type="GO" id="GO:0009052">
    <property type="term" value="P:pentose-phosphate shunt, non-oxidative branch"/>
    <property type="evidence" value="ECO:0000318"/>
    <property type="project" value="GO_Central"/>
</dbReference>
<dbReference type="CDD" id="cd00429">
    <property type="entry name" value="RPE"/>
    <property type="match status" value="1"/>
</dbReference>
<dbReference type="FunFam" id="3.20.20.70:FF:000004">
    <property type="entry name" value="Ribulose-phosphate 3-epimerase"/>
    <property type="match status" value="1"/>
</dbReference>
<dbReference type="Gene3D" id="3.20.20.70">
    <property type="entry name" value="Aldolase class I"/>
    <property type="match status" value="1"/>
</dbReference>
<dbReference type="HAMAP" id="MF_02227">
    <property type="entry name" value="RPE"/>
    <property type="match status" value="1"/>
</dbReference>
<dbReference type="InterPro" id="IPR013785">
    <property type="entry name" value="Aldolase_TIM"/>
</dbReference>
<dbReference type="InterPro" id="IPR026019">
    <property type="entry name" value="Ribul_P_3_epim"/>
</dbReference>
<dbReference type="InterPro" id="IPR000056">
    <property type="entry name" value="Ribul_P_3_epim-like"/>
</dbReference>
<dbReference type="InterPro" id="IPR011060">
    <property type="entry name" value="RibuloseP-bd_barrel"/>
</dbReference>
<dbReference type="NCBIfam" id="NF004076">
    <property type="entry name" value="PRK05581.1-4"/>
    <property type="match status" value="1"/>
</dbReference>
<dbReference type="NCBIfam" id="TIGR01163">
    <property type="entry name" value="rpe"/>
    <property type="match status" value="1"/>
</dbReference>
<dbReference type="PANTHER" id="PTHR11749">
    <property type="entry name" value="RIBULOSE-5-PHOSPHATE-3-EPIMERASE"/>
    <property type="match status" value="1"/>
</dbReference>
<dbReference type="Pfam" id="PF00834">
    <property type="entry name" value="Ribul_P_3_epim"/>
    <property type="match status" value="1"/>
</dbReference>
<dbReference type="PIRSF" id="PIRSF001461">
    <property type="entry name" value="RPE"/>
    <property type="match status" value="1"/>
</dbReference>
<dbReference type="SUPFAM" id="SSF51366">
    <property type="entry name" value="Ribulose-phoshate binding barrel"/>
    <property type="match status" value="1"/>
</dbReference>
<dbReference type="PROSITE" id="PS01085">
    <property type="entry name" value="RIBUL_P_3_EPIMER_1"/>
    <property type="match status" value="1"/>
</dbReference>
<dbReference type="PROSITE" id="PS01086">
    <property type="entry name" value="RIBUL_P_3_EPIMER_2"/>
    <property type="match status" value="1"/>
</dbReference>
<accession>O67098</accession>
<comment type="function">
    <text evidence="1">Catalyzes the reversible epimerization of D-ribulose 5-phosphate to D-xylulose 5-phosphate.</text>
</comment>
<comment type="catalytic activity">
    <reaction evidence="1">
        <text>D-ribulose 5-phosphate = D-xylulose 5-phosphate</text>
        <dbReference type="Rhea" id="RHEA:13677"/>
        <dbReference type="ChEBI" id="CHEBI:57737"/>
        <dbReference type="ChEBI" id="CHEBI:58121"/>
        <dbReference type="EC" id="5.1.3.1"/>
    </reaction>
</comment>
<comment type="cofactor">
    <cofactor evidence="1">
        <name>a divalent metal cation</name>
        <dbReference type="ChEBI" id="CHEBI:60240"/>
    </cofactor>
    <text evidence="1">Binds 1 divalent metal cation per subunit.</text>
</comment>
<comment type="pathway">
    <text evidence="1">Carbohydrate degradation.</text>
</comment>
<comment type="similarity">
    <text evidence="1">Belongs to the ribulose-phosphate 3-epimerase family.</text>
</comment>
<gene>
    <name evidence="1" type="primary">rpe</name>
    <name type="ordered locus">aq_968</name>
</gene>
<name>RPE_AQUAE</name>
<proteinExistence type="inferred from homology"/>